<name>S12A9_HUMAN</name>
<sequence length="914" mass="96110">MASESSPLLAYRLLGEEGVALPANGAGGPGGASARKLSTFLGVVVPTVLSMFSIVVFLRIGFVVGHAGLLQALAMLLVAYFILALTVLSVCAIATNGAVQGGGAYFMISRTLGPEVGGSIGLMFYLANVCGCAVSLLGLVESVLDVFGADATGPSGLRVLPQGYGWNLLYGSLLLGLVGGVCTLGAGLYARASFLTFLLVSGSLASVLISFVAVGPRDIRLTPRPGPNGSSLPPRFGHFTGFNSSTLKDNLGAGYAEDYTTGAVMNFASVFAVLFNGCTGIMAGANMSGELKDPSRAIPLGTIVAVAYTFFVYVLLFFLSSFTCDRTLLQEDYGFFRAISLWPPLVLIGIYATALSASMSSLIGASRILHALARDDLFGVILAPAKVVSRGGNPWAAVLYSWGLVQLVLLAGKLNTLAAVVTVFYLVAYAAVDLSCLSLEWASAPNFRPTFSLFSWHTCLLGVASCLLMMFLISPGAAGGSLLLMGLLAALLTARGGPSSWGYVSQALLFHQVRKYLLRLDVRKDHVKFWRPQLLLLVGNPRGALPLLRLANQLKKGGLYVLGHVTLGDLDSLPSDPVQPQYGAWLSLVDRAQVKAFVDLTLSPSVRQGAQHLLRISGLGGMKPNTLVLGFYDDAPPQDHFLTDPAFSEPADSTREGSSPALSTLFPPPRAPGSPRALNPQDYVATVADALKMNKNVVLARASGALPPERLSRGSGGTSQLHHVDVWPLNLLRPRGGPGYVDVCGLFLLQMATILGMVPAWHSARLRIFLCLGPREAPGAAEGRLRALLSQLRIRAEVQEVVWGEGAGAGEPEAEEEGDFVNSGRGDAEAEALARSANALVRAQQGRGTGGGPGGPEGGDAEGPITALTFLYLPRPPADPARYPRYLALLETLTRDLGPTLLVHGVTPVTCTDL</sequence>
<organism>
    <name type="scientific">Homo sapiens</name>
    <name type="common">Human</name>
    <dbReference type="NCBI Taxonomy" id="9606"/>
    <lineage>
        <taxon>Eukaryota</taxon>
        <taxon>Metazoa</taxon>
        <taxon>Chordata</taxon>
        <taxon>Craniata</taxon>
        <taxon>Vertebrata</taxon>
        <taxon>Euteleostomi</taxon>
        <taxon>Mammalia</taxon>
        <taxon>Eutheria</taxon>
        <taxon>Euarchontoglires</taxon>
        <taxon>Primates</taxon>
        <taxon>Haplorrhini</taxon>
        <taxon>Catarrhini</taxon>
        <taxon>Hominidae</taxon>
        <taxon>Homo</taxon>
    </lineage>
</organism>
<evidence type="ECO:0000255" key="1"/>
<evidence type="ECO:0000256" key="2">
    <source>
        <dbReference type="SAM" id="MobiDB-lite"/>
    </source>
</evidence>
<evidence type="ECO:0000269" key="3">
    <source>
    </source>
</evidence>
<evidence type="ECO:0000269" key="4">
    <source>
    </source>
</evidence>
<evidence type="ECO:0000303" key="5">
    <source>
    </source>
</evidence>
<evidence type="ECO:0000303" key="6">
    <source>
    </source>
</evidence>
<evidence type="ECO:0000305" key="7"/>
<evidence type="ECO:0007744" key="8">
    <source>
    </source>
</evidence>
<reference key="1">
    <citation type="journal article" date="2000" name="J. Biol. Chem.">
        <title>Cloning and functional characterization of a cation-Cl-cotransporter-interacting protein.</title>
        <authorList>
            <person name="Caron L."/>
            <person name="Rousseau F."/>
            <person name="Gagnon E."/>
            <person name="Isenring P."/>
        </authorList>
    </citation>
    <scope>NUCLEOTIDE SEQUENCE [MRNA] (ISOFORM 1)</scope>
    <scope>FUNCTION</scope>
    <scope>SUBCELLULAR LOCATION</scope>
    <scope>INTERACTION WITH SLC12A1</scope>
    <source>
        <tissue>Heart</tissue>
    </source>
</reference>
<reference key="2">
    <citation type="journal article" date="2001" name="Nucleic Acids Res.">
        <title>Comparative analysis of the gene-dense ACHE/TFR2 region on human chromosome 7q22 with the orthologous region on mouse chromosome 5.</title>
        <authorList>
            <person name="Wilson M.D."/>
            <person name="Riemer C."/>
            <person name="Martindale D.W."/>
            <person name="Schnupf P."/>
            <person name="Boright A.P."/>
            <person name="Cheung T.L."/>
            <person name="Hardy D.M."/>
            <person name="Schwartz S."/>
            <person name="Scherer S.W."/>
            <person name="Tsui L.-C."/>
            <person name="Miller W."/>
            <person name="Koop B.F."/>
        </authorList>
    </citation>
    <scope>NUCLEOTIDE SEQUENCE [GENOMIC DNA] (ISOFORMS 1 AND 3)</scope>
</reference>
<reference key="3">
    <citation type="submission" date="1999-10" db="EMBL/GenBank/DDBJ databases">
        <title>Molecular cloning of human cation chloride cotransporter 6.</title>
        <authorList>
            <person name="Ishibashi K."/>
        </authorList>
    </citation>
    <scope>NUCLEOTIDE SEQUENCE [MRNA] (ISOFORM 1)</scope>
</reference>
<reference key="4">
    <citation type="journal article" date="2004" name="Nat. Genet.">
        <title>Complete sequencing and characterization of 21,243 full-length human cDNAs.</title>
        <authorList>
            <person name="Ota T."/>
            <person name="Suzuki Y."/>
            <person name="Nishikawa T."/>
            <person name="Otsuki T."/>
            <person name="Sugiyama T."/>
            <person name="Irie R."/>
            <person name="Wakamatsu A."/>
            <person name="Hayashi K."/>
            <person name="Sato H."/>
            <person name="Nagai K."/>
            <person name="Kimura K."/>
            <person name="Makita H."/>
            <person name="Sekine M."/>
            <person name="Obayashi M."/>
            <person name="Nishi T."/>
            <person name="Shibahara T."/>
            <person name="Tanaka T."/>
            <person name="Ishii S."/>
            <person name="Yamamoto J."/>
            <person name="Saito K."/>
            <person name="Kawai Y."/>
            <person name="Isono Y."/>
            <person name="Nakamura Y."/>
            <person name="Nagahari K."/>
            <person name="Murakami K."/>
            <person name="Yasuda T."/>
            <person name="Iwayanagi T."/>
            <person name="Wagatsuma M."/>
            <person name="Shiratori A."/>
            <person name="Sudo H."/>
            <person name="Hosoiri T."/>
            <person name="Kaku Y."/>
            <person name="Kodaira H."/>
            <person name="Kondo H."/>
            <person name="Sugawara M."/>
            <person name="Takahashi M."/>
            <person name="Kanda K."/>
            <person name="Yokoi T."/>
            <person name="Furuya T."/>
            <person name="Kikkawa E."/>
            <person name="Omura Y."/>
            <person name="Abe K."/>
            <person name="Kamihara K."/>
            <person name="Katsuta N."/>
            <person name="Sato K."/>
            <person name="Tanikawa M."/>
            <person name="Yamazaki M."/>
            <person name="Ninomiya K."/>
            <person name="Ishibashi T."/>
            <person name="Yamashita H."/>
            <person name="Murakawa K."/>
            <person name="Fujimori K."/>
            <person name="Tanai H."/>
            <person name="Kimata M."/>
            <person name="Watanabe M."/>
            <person name="Hiraoka S."/>
            <person name="Chiba Y."/>
            <person name="Ishida S."/>
            <person name="Ono Y."/>
            <person name="Takiguchi S."/>
            <person name="Watanabe S."/>
            <person name="Yosida M."/>
            <person name="Hotuta T."/>
            <person name="Kusano J."/>
            <person name="Kanehori K."/>
            <person name="Takahashi-Fujii A."/>
            <person name="Hara H."/>
            <person name="Tanase T.-O."/>
            <person name="Nomura Y."/>
            <person name="Togiya S."/>
            <person name="Komai F."/>
            <person name="Hara R."/>
            <person name="Takeuchi K."/>
            <person name="Arita M."/>
            <person name="Imose N."/>
            <person name="Musashino K."/>
            <person name="Yuuki H."/>
            <person name="Oshima A."/>
            <person name="Sasaki N."/>
            <person name="Aotsuka S."/>
            <person name="Yoshikawa Y."/>
            <person name="Matsunawa H."/>
            <person name="Ichihara T."/>
            <person name="Shiohata N."/>
            <person name="Sano S."/>
            <person name="Moriya S."/>
            <person name="Momiyama H."/>
            <person name="Satoh N."/>
            <person name="Takami S."/>
            <person name="Terashima Y."/>
            <person name="Suzuki O."/>
            <person name="Nakagawa S."/>
            <person name="Senoh A."/>
            <person name="Mizoguchi H."/>
            <person name="Goto Y."/>
            <person name="Shimizu F."/>
            <person name="Wakebe H."/>
            <person name="Hishigaki H."/>
            <person name="Watanabe T."/>
            <person name="Sugiyama A."/>
            <person name="Takemoto M."/>
            <person name="Kawakami B."/>
            <person name="Yamazaki M."/>
            <person name="Watanabe K."/>
            <person name="Kumagai A."/>
            <person name="Itakura S."/>
            <person name="Fukuzumi Y."/>
            <person name="Fujimori Y."/>
            <person name="Komiyama M."/>
            <person name="Tashiro H."/>
            <person name="Tanigami A."/>
            <person name="Fujiwara T."/>
            <person name="Ono T."/>
            <person name="Yamada K."/>
            <person name="Fujii Y."/>
            <person name="Ozaki K."/>
            <person name="Hirao M."/>
            <person name="Ohmori Y."/>
            <person name="Kawabata A."/>
            <person name="Hikiji T."/>
            <person name="Kobatake N."/>
            <person name="Inagaki H."/>
            <person name="Ikema Y."/>
            <person name="Okamoto S."/>
            <person name="Okitani R."/>
            <person name="Kawakami T."/>
            <person name="Noguchi S."/>
            <person name="Itoh T."/>
            <person name="Shigeta K."/>
            <person name="Senba T."/>
            <person name="Matsumura K."/>
            <person name="Nakajima Y."/>
            <person name="Mizuno T."/>
            <person name="Morinaga M."/>
            <person name="Sasaki M."/>
            <person name="Togashi T."/>
            <person name="Oyama M."/>
            <person name="Hata H."/>
            <person name="Watanabe M."/>
            <person name="Komatsu T."/>
            <person name="Mizushima-Sugano J."/>
            <person name="Satoh T."/>
            <person name="Shirai Y."/>
            <person name="Takahashi Y."/>
            <person name="Nakagawa K."/>
            <person name="Okumura K."/>
            <person name="Nagase T."/>
            <person name="Nomura N."/>
            <person name="Kikuchi H."/>
            <person name="Masuho Y."/>
            <person name="Yamashita R."/>
            <person name="Nakai K."/>
            <person name="Yada T."/>
            <person name="Nakamura Y."/>
            <person name="Ohara O."/>
            <person name="Isogai T."/>
            <person name="Sugano S."/>
        </authorList>
    </citation>
    <scope>NUCLEOTIDE SEQUENCE [LARGE SCALE MRNA] (ISOFORM 4)</scope>
    <source>
        <tissue>Synovium</tissue>
    </source>
</reference>
<reference key="5">
    <citation type="journal article" date="2003" name="Nature">
        <title>The DNA sequence of human chromosome 7.</title>
        <authorList>
            <person name="Hillier L.W."/>
            <person name="Fulton R.S."/>
            <person name="Fulton L.A."/>
            <person name="Graves T.A."/>
            <person name="Pepin K.H."/>
            <person name="Wagner-McPherson C."/>
            <person name="Layman D."/>
            <person name="Maas J."/>
            <person name="Jaeger S."/>
            <person name="Walker R."/>
            <person name="Wylie K."/>
            <person name="Sekhon M."/>
            <person name="Becker M.C."/>
            <person name="O'Laughlin M.D."/>
            <person name="Schaller M.E."/>
            <person name="Fewell G.A."/>
            <person name="Delehaunty K.D."/>
            <person name="Miner T.L."/>
            <person name="Nash W.E."/>
            <person name="Cordes M."/>
            <person name="Du H."/>
            <person name="Sun H."/>
            <person name="Edwards J."/>
            <person name="Bradshaw-Cordum H."/>
            <person name="Ali J."/>
            <person name="Andrews S."/>
            <person name="Isak A."/>
            <person name="Vanbrunt A."/>
            <person name="Nguyen C."/>
            <person name="Du F."/>
            <person name="Lamar B."/>
            <person name="Courtney L."/>
            <person name="Kalicki J."/>
            <person name="Ozersky P."/>
            <person name="Bielicki L."/>
            <person name="Scott K."/>
            <person name="Holmes A."/>
            <person name="Harkins R."/>
            <person name="Harris A."/>
            <person name="Strong C.M."/>
            <person name="Hou S."/>
            <person name="Tomlinson C."/>
            <person name="Dauphin-Kohlberg S."/>
            <person name="Kozlowicz-Reilly A."/>
            <person name="Leonard S."/>
            <person name="Rohlfing T."/>
            <person name="Rock S.M."/>
            <person name="Tin-Wollam A.-M."/>
            <person name="Abbott A."/>
            <person name="Minx P."/>
            <person name="Maupin R."/>
            <person name="Strowmatt C."/>
            <person name="Latreille P."/>
            <person name="Miller N."/>
            <person name="Johnson D."/>
            <person name="Murray J."/>
            <person name="Woessner J.P."/>
            <person name="Wendl M.C."/>
            <person name="Yang S.-P."/>
            <person name="Schultz B.R."/>
            <person name="Wallis J.W."/>
            <person name="Spieth J."/>
            <person name="Bieri T.A."/>
            <person name="Nelson J.O."/>
            <person name="Berkowicz N."/>
            <person name="Wohldmann P.E."/>
            <person name="Cook L.L."/>
            <person name="Hickenbotham M.T."/>
            <person name="Eldred J."/>
            <person name="Williams D."/>
            <person name="Bedell J.A."/>
            <person name="Mardis E.R."/>
            <person name="Clifton S.W."/>
            <person name="Chissoe S.L."/>
            <person name="Marra M.A."/>
            <person name="Raymond C."/>
            <person name="Haugen E."/>
            <person name="Gillett W."/>
            <person name="Zhou Y."/>
            <person name="James R."/>
            <person name="Phelps K."/>
            <person name="Iadanoto S."/>
            <person name="Bubb K."/>
            <person name="Simms E."/>
            <person name="Levy R."/>
            <person name="Clendenning J."/>
            <person name="Kaul R."/>
            <person name="Kent W.J."/>
            <person name="Furey T.S."/>
            <person name="Baertsch R.A."/>
            <person name="Brent M.R."/>
            <person name="Keibler E."/>
            <person name="Flicek P."/>
            <person name="Bork P."/>
            <person name="Suyama M."/>
            <person name="Bailey J.A."/>
            <person name="Portnoy M.E."/>
            <person name="Torrents D."/>
            <person name="Chinwalla A.T."/>
            <person name="Gish W.R."/>
            <person name="Eddy S.R."/>
            <person name="McPherson J.D."/>
            <person name="Olson M.V."/>
            <person name="Eichler E.E."/>
            <person name="Green E.D."/>
            <person name="Waterston R.H."/>
            <person name="Wilson R.K."/>
        </authorList>
    </citation>
    <scope>NUCLEOTIDE SEQUENCE [LARGE SCALE GENOMIC DNA]</scope>
</reference>
<reference key="6">
    <citation type="submission" date="2005-09" db="EMBL/GenBank/DDBJ databases">
        <authorList>
            <person name="Mural R.J."/>
            <person name="Istrail S."/>
            <person name="Sutton G.G."/>
            <person name="Florea L."/>
            <person name="Halpern A.L."/>
            <person name="Mobarry C.M."/>
            <person name="Lippert R."/>
            <person name="Walenz B."/>
            <person name="Shatkay H."/>
            <person name="Dew I."/>
            <person name="Miller J.R."/>
            <person name="Flanigan M.J."/>
            <person name="Edwards N.J."/>
            <person name="Bolanos R."/>
            <person name="Fasulo D."/>
            <person name="Halldorsson B.V."/>
            <person name="Hannenhalli S."/>
            <person name="Turner R."/>
            <person name="Yooseph S."/>
            <person name="Lu F."/>
            <person name="Nusskern D.R."/>
            <person name="Shue B.C."/>
            <person name="Zheng X.H."/>
            <person name="Zhong F."/>
            <person name="Delcher A.L."/>
            <person name="Huson D.H."/>
            <person name="Kravitz S.A."/>
            <person name="Mouchard L."/>
            <person name="Reinert K."/>
            <person name="Remington K.A."/>
            <person name="Clark A.G."/>
            <person name="Waterman M.S."/>
            <person name="Eichler E.E."/>
            <person name="Adams M.D."/>
            <person name="Hunkapiller M.W."/>
            <person name="Myers E.W."/>
            <person name="Venter J.C."/>
        </authorList>
    </citation>
    <scope>NUCLEOTIDE SEQUENCE [LARGE SCALE GENOMIC DNA]</scope>
</reference>
<reference key="7">
    <citation type="journal article" date="2004" name="Genome Res.">
        <title>The status, quality, and expansion of the NIH full-length cDNA project: the Mammalian Gene Collection (MGC).</title>
        <authorList>
            <consortium name="The MGC Project Team"/>
        </authorList>
    </citation>
    <scope>NUCLEOTIDE SEQUENCE [LARGE SCALE MRNA] (ISOFORM 2)</scope>
    <source>
        <tissue>Placenta</tissue>
    </source>
</reference>
<reference key="8">
    <citation type="journal article" date="2013" name="J. Proteome Res.">
        <title>Toward a comprehensive characterization of a human cancer cell phosphoproteome.</title>
        <authorList>
            <person name="Zhou H."/>
            <person name="Di Palma S."/>
            <person name="Preisinger C."/>
            <person name="Peng M."/>
            <person name="Polat A.N."/>
            <person name="Heck A.J."/>
            <person name="Mohammed S."/>
        </authorList>
    </citation>
    <scope>PHOSPHORYLATION [LARGE SCALE ANALYSIS] AT SER-6</scope>
    <scope>IDENTIFICATION BY MASS SPECTROMETRY [LARGE SCALE ANALYSIS]</scope>
    <source>
        <tissue>Cervix carcinoma</tissue>
        <tissue>Erythroleukemia</tissue>
    </source>
</reference>
<reference key="9">
    <citation type="journal article" date="2024" name="Genet. Med.">
        <title>Biallelic loss-of-function variants of SLC12A9 cause lysosome dysfunction and a syndromic neurodevelopmental disorder.</title>
        <authorList>
            <person name="Accogli A."/>
            <person name="Park Y.N."/>
            <person name="Lenk G.M."/>
            <person name="Severino M."/>
            <person name="Scala M."/>
            <person name="Denecke J."/>
            <person name="Hempel M."/>
            <person name="Lessel D."/>
            <person name="Kortuem F."/>
            <person name="Salpietro V."/>
            <person name="de Marco P."/>
            <person name="Guerrisi S."/>
            <person name="Torella A."/>
            <person name="Nigro V."/>
            <person name="Srour M."/>
            <person name="Turro E."/>
            <person name="Labarque V."/>
            <person name="Freson K."/>
            <person name="Piatelli G."/>
            <person name="Capra V."/>
            <person name="Kitzman J.O."/>
            <person name="Meisler M.H."/>
        </authorList>
    </citation>
    <scope>VARIANTS LYS-552 AND 615-ARG--LEU-914 DEL</scope>
    <scope>FUNCTION</scope>
    <scope>SUBCELLULAR LOCATION</scope>
    <scope>INVOLVEMENT IN NEURODEVELOPMENTAL DISORDER</scope>
</reference>
<dbReference type="EMBL" id="AF284422">
    <property type="protein sequence ID" value="AAF88060.1"/>
    <property type="molecule type" value="mRNA"/>
</dbReference>
<dbReference type="EMBL" id="AF312032">
    <property type="protein sequence ID" value="AAK21008.1"/>
    <property type="molecule type" value="Genomic_DNA"/>
</dbReference>
<dbReference type="EMBL" id="AF312032">
    <property type="protein sequence ID" value="AAK21009.1"/>
    <property type="molecule type" value="Genomic_DNA"/>
</dbReference>
<dbReference type="EMBL" id="AB033284">
    <property type="protein sequence ID" value="BAB40456.1"/>
    <property type="molecule type" value="mRNA"/>
</dbReference>
<dbReference type="EMBL" id="AK301411">
    <property type="protein sequence ID" value="BAH13476.1"/>
    <property type="molecule type" value="mRNA"/>
</dbReference>
<dbReference type="EMBL" id="AC011895">
    <property type="status" value="NOT_ANNOTATED_CDS"/>
    <property type="molecule type" value="Genomic_DNA"/>
</dbReference>
<dbReference type="EMBL" id="CH236956">
    <property type="protein sequence ID" value="EAL23818.1"/>
    <property type="molecule type" value="Genomic_DNA"/>
</dbReference>
<dbReference type="EMBL" id="CH471091">
    <property type="protein sequence ID" value="EAW76475.1"/>
    <property type="molecule type" value="Genomic_DNA"/>
</dbReference>
<dbReference type="EMBL" id="CH471091">
    <property type="protein sequence ID" value="EAW76476.1"/>
    <property type="molecule type" value="Genomic_DNA"/>
</dbReference>
<dbReference type="EMBL" id="CH471091">
    <property type="protein sequence ID" value="EAW76483.1"/>
    <property type="molecule type" value="Genomic_DNA"/>
</dbReference>
<dbReference type="EMBL" id="CH471091">
    <property type="protein sequence ID" value="EAW76480.1"/>
    <property type="molecule type" value="Genomic_DNA"/>
</dbReference>
<dbReference type="EMBL" id="CH471091">
    <property type="protein sequence ID" value="EAW76484.1"/>
    <property type="molecule type" value="Genomic_DNA"/>
</dbReference>
<dbReference type="EMBL" id="CH471091">
    <property type="protein sequence ID" value="EAW76485.1"/>
    <property type="molecule type" value="Genomic_DNA"/>
</dbReference>
<dbReference type="EMBL" id="BC000154">
    <property type="protein sequence ID" value="AAH00154.1"/>
    <property type="molecule type" value="mRNA"/>
</dbReference>
<dbReference type="CCDS" id="CCDS5707.1">
    <molecule id="Q9BXP2-1"/>
</dbReference>
<dbReference type="CCDS" id="CCDS59068.1">
    <molecule id="Q9BXP2-4"/>
</dbReference>
<dbReference type="CCDS" id="CCDS59069.1">
    <molecule id="Q9BXP2-2"/>
</dbReference>
<dbReference type="RefSeq" id="NP_001254741.1">
    <molecule id="Q9BXP2-4"/>
    <property type="nucleotide sequence ID" value="NM_001267812.2"/>
</dbReference>
<dbReference type="RefSeq" id="NP_001254743.1">
    <molecule id="Q9BXP2-2"/>
    <property type="nucleotide sequence ID" value="NM_001267814.2"/>
</dbReference>
<dbReference type="RefSeq" id="NP_001350422.1">
    <molecule id="Q9BXP2-1"/>
    <property type="nucleotide sequence ID" value="NM_001363493.2"/>
</dbReference>
<dbReference type="RefSeq" id="NP_064631.2">
    <molecule id="Q9BXP2-1"/>
    <property type="nucleotide sequence ID" value="NM_020246.3"/>
</dbReference>
<dbReference type="RefSeq" id="XP_047276582.1">
    <molecule id="Q9BXP2-1"/>
    <property type="nucleotide sequence ID" value="XM_047420626.1"/>
</dbReference>
<dbReference type="RefSeq" id="XP_047276583.1">
    <molecule id="Q9BXP2-1"/>
    <property type="nucleotide sequence ID" value="XM_047420627.1"/>
</dbReference>
<dbReference type="RefSeq" id="XP_047276584.1">
    <molecule id="Q9BXP2-1"/>
    <property type="nucleotide sequence ID" value="XM_047420628.1"/>
</dbReference>
<dbReference type="RefSeq" id="XP_054214649.1">
    <molecule id="Q9BXP2-1"/>
    <property type="nucleotide sequence ID" value="XM_054358674.1"/>
</dbReference>
<dbReference type="RefSeq" id="XP_054214650.1">
    <molecule id="Q9BXP2-1"/>
    <property type="nucleotide sequence ID" value="XM_054358675.1"/>
</dbReference>
<dbReference type="RefSeq" id="XP_054214651.1">
    <molecule id="Q9BXP2-1"/>
    <property type="nucleotide sequence ID" value="XM_054358676.1"/>
</dbReference>
<dbReference type="SMR" id="Q9BXP2"/>
<dbReference type="BioGRID" id="121311">
    <property type="interactions" value="67"/>
</dbReference>
<dbReference type="FunCoup" id="Q9BXP2">
    <property type="interactions" value="756"/>
</dbReference>
<dbReference type="IntAct" id="Q9BXP2">
    <property type="interactions" value="47"/>
</dbReference>
<dbReference type="STRING" id="9606.ENSP00000275730"/>
<dbReference type="TCDB" id="2.A.30.1.6">
    <property type="family name" value="the cation-chloride cotransporter (ccc) family"/>
</dbReference>
<dbReference type="GlyCosmos" id="Q9BXP2">
    <property type="glycosylation" value="2 sites, No reported glycans"/>
</dbReference>
<dbReference type="GlyGen" id="Q9BXP2">
    <property type="glycosylation" value="3 sites, 2 N-linked glycans (2 sites), 1 O-linked glycan (1 site)"/>
</dbReference>
<dbReference type="iPTMnet" id="Q9BXP2"/>
<dbReference type="PhosphoSitePlus" id="Q9BXP2"/>
<dbReference type="SwissPalm" id="Q9BXP2"/>
<dbReference type="BioMuta" id="SLC12A9"/>
<dbReference type="DMDM" id="74752435"/>
<dbReference type="jPOST" id="Q9BXP2"/>
<dbReference type="MassIVE" id="Q9BXP2"/>
<dbReference type="PaxDb" id="9606-ENSP00000275730"/>
<dbReference type="PeptideAtlas" id="Q9BXP2"/>
<dbReference type="ProteomicsDB" id="27743"/>
<dbReference type="ProteomicsDB" id="79472">
    <molecule id="Q9BXP2-1"/>
</dbReference>
<dbReference type="ProteomicsDB" id="79473">
    <molecule id="Q9BXP2-2"/>
</dbReference>
<dbReference type="ProteomicsDB" id="79474">
    <molecule id="Q9BXP2-3"/>
</dbReference>
<dbReference type="Pumba" id="Q9BXP2"/>
<dbReference type="Antibodypedia" id="74017">
    <property type="antibodies" value="33 antibodies from 9 providers"/>
</dbReference>
<dbReference type="DNASU" id="56996"/>
<dbReference type="Ensembl" id="ENST00000354161.8">
    <molecule id="Q9BXP2-1"/>
    <property type="protein sequence ID" value="ENSP00000275730.4"/>
    <property type="gene ID" value="ENSG00000146828.18"/>
</dbReference>
<dbReference type="Ensembl" id="ENST00000415287.5">
    <molecule id="Q9BXP2-2"/>
    <property type="protein sequence ID" value="ENSP00000413796.1"/>
    <property type="gene ID" value="ENSG00000146828.18"/>
</dbReference>
<dbReference type="Ensembl" id="ENST00000540482.5">
    <molecule id="Q9BXP2-4"/>
    <property type="protein sequence ID" value="ENSP00000443702.1"/>
    <property type="gene ID" value="ENSG00000146828.18"/>
</dbReference>
<dbReference type="GeneID" id="56996"/>
<dbReference type="KEGG" id="hsa:56996"/>
<dbReference type="MANE-Select" id="ENST00000354161.8">
    <property type="protein sequence ID" value="ENSP00000275730.4"/>
    <property type="RefSeq nucleotide sequence ID" value="NM_020246.4"/>
    <property type="RefSeq protein sequence ID" value="NP_064631.2"/>
</dbReference>
<dbReference type="UCSC" id="uc003uwp.5">
    <molecule id="Q9BXP2-1"/>
    <property type="organism name" value="human"/>
</dbReference>
<dbReference type="AGR" id="HGNC:17435"/>
<dbReference type="CTD" id="56996"/>
<dbReference type="DisGeNET" id="56996"/>
<dbReference type="GeneCards" id="SLC12A9"/>
<dbReference type="HGNC" id="HGNC:17435">
    <property type="gene designation" value="SLC12A9"/>
</dbReference>
<dbReference type="HPA" id="ENSG00000146828">
    <property type="expression patterns" value="Low tissue specificity"/>
</dbReference>
<dbReference type="MalaCards" id="SLC12A9"/>
<dbReference type="MIM" id="616861">
    <property type="type" value="gene"/>
</dbReference>
<dbReference type="neXtProt" id="NX_Q9BXP2"/>
<dbReference type="OpenTargets" id="ENSG00000146828"/>
<dbReference type="PharmGKB" id="PA134921585"/>
<dbReference type="VEuPathDB" id="HostDB:ENSG00000146828"/>
<dbReference type="eggNOG" id="KOG1288">
    <property type="taxonomic scope" value="Eukaryota"/>
</dbReference>
<dbReference type="GeneTree" id="ENSGT00940000159400"/>
<dbReference type="HOGENOM" id="CLU_001883_5_0_1"/>
<dbReference type="InParanoid" id="Q9BXP2"/>
<dbReference type="OMA" id="NIKYWRP"/>
<dbReference type="OrthoDB" id="2020542at2759"/>
<dbReference type="PAN-GO" id="Q9BXP2">
    <property type="GO annotations" value="5 GO annotations based on evolutionary models"/>
</dbReference>
<dbReference type="PhylomeDB" id="Q9BXP2"/>
<dbReference type="TreeFam" id="TF313191"/>
<dbReference type="PathwayCommons" id="Q9BXP2"/>
<dbReference type="SignaLink" id="Q9BXP2"/>
<dbReference type="BioGRID-ORCS" id="56996">
    <property type="hits" value="25 hits in 1179 CRISPR screens"/>
</dbReference>
<dbReference type="ChiTaRS" id="SLC12A9">
    <property type="organism name" value="human"/>
</dbReference>
<dbReference type="GeneWiki" id="SLC12A9"/>
<dbReference type="GenomeRNAi" id="56996"/>
<dbReference type="Pharos" id="Q9BXP2">
    <property type="development level" value="Tdark"/>
</dbReference>
<dbReference type="PRO" id="PR:Q9BXP2"/>
<dbReference type="Proteomes" id="UP000005640">
    <property type="component" value="Chromosome 7"/>
</dbReference>
<dbReference type="RNAct" id="Q9BXP2">
    <property type="molecule type" value="protein"/>
</dbReference>
<dbReference type="Bgee" id="ENSG00000146828">
    <property type="expression patterns" value="Expressed in granulocyte and 162 other cell types or tissues"/>
</dbReference>
<dbReference type="ExpressionAtlas" id="Q9BXP2">
    <property type="expression patterns" value="baseline and differential"/>
</dbReference>
<dbReference type="GO" id="GO:0070062">
    <property type="term" value="C:extracellular exosome"/>
    <property type="evidence" value="ECO:0007005"/>
    <property type="project" value="UniProtKB"/>
</dbReference>
<dbReference type="GO" id="GO:0005765">
    <property type="term" value="C:lysosomal membrane"/>
    <property type="evidence" value="ECO:0007669"/>
    <property type="project" value="UniProtKB-SubCell"/>
</dbReference>
<dbReference type="GO" id="GO:0016020">
    <property type="term" value="C:membrane"/>
    <property type="evidence" value="ECO:0000304"/>
    <property type="project" value="ProtInc"/>
</dbReference>
<dbReference type="GO" id="GO:0005886">
    <property type="term" value="C:plasma membrane"/>
    <property type="evidence" value="ECO:0007669"/>
    <property type="project" value="UniProtKB-SubCell"/>
</dbReference>
<dbReference type="GO" id="GO:0015377">
    <property type="term" value="F:chloride:monoatomic cation symporter activity"/>
    <property type="evidence" value="ECO:0000304"/>
    <property type="project" value="ProtInc"/>
</dbReference>
<dbReference type="GO" id="GO:0015379">
    <property type="term" value="F:potassium:chloride symporter activity"/>
    <property type="evidence" value="ECO:0000318"/>
    <property type="project" value="GO_Central"/>
</dbReference>
<dbReference type="GO" id="GO:0006884">
    <property type="term" value="P:cell volume homeostasis"/>
    <property type="evidence" value="ECO:0000318"/>
    <property type="project" value="GO_Central"/>
</dbReference>
<dbReference type="GO" id="GO:0055064">
    <property type="term" value="P:chloride ion homeostasis"/>
    <property type="evidence" value="ECO:0000318"/>
    <property type="project" value="GO_Central"/>
</dbReference>
<dbReference type="GO" id="GO:1902476">
    <property type="term" value="P:chloride transmembrane transport"/>
    <property type="evidence" value="ECO:0000318"/>
    <property type="project" value="GO_Central"/>
</dbReference>
<dbReference type="GO" id="GO:0055075">
    <property type="term" value="P:potassium ion homeostasis"/>
    <property type="evidence" value="ECO:0000318"/>
    <property type="project" value="GO_Central"/>
</dbReference>
<dbReference type="FunFam" id="1.20.1740.10:FF:000013">
    <property type="entry name" value="Solute carrier family 12 member"/>
    <property type="match status" value="1"/>
</dbReference>
<dbReference type="Gene3D" id="1.20.1740.10">
    <property type="entry name" value="Amino acid/polyamine transporter I"/>
    <property type="match status" value="1"/>
</dbReference>
<dbReference type="InterPro" id="IPR004841">
    <property type="entry name" value="AA-permease/SLC12A_dom"/>
</dbReference>
<dbReference type="InterPro" id="IPR018491">
    <property type="entry name" value="SLC12_C"/>
</dbReference>
<dbReference type="InterPro" id="IPR004842">
    <property type="entry name" value="SLC12A_fam"/>
</dbReference>
<dbReference type="PANTHER" id="PTHR11827:SF98">
    <property type="entry name" value="SOLUTE CARRIER FAMILY 12 MEMBER 9"/>
    <property type="match status" value="1"/>
</dbReference>
<dbReference type="PANTHER" id="PTHR11827">
    <property type="entry name" value="SOLUTE CARRIER FAMILY 12, CATION COTRANSPORTERS"/>
    <property type="match status" value="1"/>
</dbReference>
<dbReference type="Pfam" id="PF00324">
    <property type="entry name" value="AA_permease"/>
    <property type="match status" value="1"/>
</dbReference>
<dbReference type="Pfam" id="PF03522">
    <property type="entry name" value="SLC12"/>
    <property type="match status" value="1"/>
</dbReference>
<keyword id="KW-0025">Alternative splicing</keyword>
<keyword id="KW-1003">Cell membrane</keyword>
<keyword id="KW-0325">Glycoprotein</keyword>
<keyword id="KW-0458">Lysosome</keyword>
<keyword id="KW-0472">Membrane</keyword>
<keyword id="KW-0597">Phosphoprotein</keyword>
<keyword id="KW-1267">Proteomics identification</keyword>
<keyword id="KW-1185">Reference proteome</keyword>
<keyword id="KW-0812">Transmembrane</keyword>
<keyword id="KW-1133">Transmembrane helix</keyword>
<keyword id="KW-0813">Transport</keyword>
<feature type="chain" id="PRO_0000331415" description="Solute carrier family 12 member 9">
    <location>
        <begin position="1"/>
        <end position="914"/>
    </location>
</feature>
<feature type="topological domain" description="Cytoplasmic" evidence="1">
    <location>
        <begin position="1"/>
        <end position="36"/>
    </location>
</feature>
<feature type="transmembrane region" description="Helical" evidence="1">
    <location>
        <begin position="37"/>
        <end position="57"/>
    </location>
</feature>
<feature type="topological domain" description="Extracellular" evidence="1">
    <location>
        <begin position="58"/>
        <end position="72"/>
    </location>
</feature>
<feature type="transmembrane region" description="Helical" evidence="1">
    <location>
        <begin position="73"/>
        <end position="93"/>
    </location>
</feature>
<feature type="topological domain" description="Cytoplasmic" evidence="1">
    <location>
        <begin position="94"/>
        <end position="119"/>
    </location>
</feature>
<feature type="transmembrane region" description="Helical" evidence="1">
    <location>
        <begin position="120"/>
        <end position="140"/>
    </location>
</feature>
<feature type="topological domain" description="Extracellular" evidence="1">
    <location>
        <begin position="141"/>
        <end position="167"/>
    </location>
</feature>
<feature type="transmembrane region" description="Helical" evidence="1">
    <location>
        <begin position="168"/>
        <end position="188"/>
    </location>
</feature>
<feature type="topological domain" description="Cytoplasmic" evidence="1">
    <location>
        <begin position="189"/>
        <end position="193"/>
    </location>
</feature>
<feature type="transmembrane region" description="Helical" evidence="1">
    <location>
        <begin position="194"/>
        <end position="214"/>
    </location>
</feature>
<feature type="topological domain" description="Extracellular" evidence="1">
    <location>
        <begin position="215"/>
        <end position="262"/>
    </location>
</feature>
<feature type="transmembrane region" description="Helical" evidence="1">
    <location>
        <begin position="263"/>
        <end position="283"/>
    </location>
</feature>
<feature type="topological domain" description="Cytoplasmic" evidence="1">
    <location>
        <begin position="284"/>
        <end position="297"/>
    </location>
</feature>
<feature type="transmembrane region" description="Helical" evidence="1">
    <location>
        <begin position="298"/>
        <end position="318"/>
    </location>
</feature>
<feature type="topological domain" description="Extracellular" evidence="1">
    <location>
        <begin position="319"/>
        <end position="338"/>
    </location>
</feature>
<feature type="transmembrane region" description="Helical" evidence="1">
    <location>
        <begin position="339"/>
        <end position="359"/>
    </location>
</feature>
<feature type="topological domain" description="Cytoplasmic" evidence="1">
    <location>
        <begin position="360"/>
        <end position="390"/>
    </location>
</feature>
<feature type="transmembrane region" description="Helical" evidence="1">
    <location>
        <begin position="391"/>
        <end position="411"/>
    </location>
</feature>
<feature type="topological domain" description="Extracellular" evidence="1">
    <location>
        <begin position="412"/>
        <end position="416"/>
    </location>
</feature>
<feature type="transmembrane region" description="Helical" evidence="1">
    <location>
        <begin position="417"/>
        <end position="437"/>
    </location>
</feature>
<feature type="topological domain" description="Cytoplasmic" evidence="1">
    <location>
        <begin position="438"/>
        <end position="466"/>
    </location>
</feature>
<feature type="transmembrane region" description="Helical" evidence="1">
    <location>
        <begin position="467"/>
        <end position="487"/>
    </location>
</feature>
<feature type="topological domain" description="Extracellular" evidence="1">
    <location>
        <begin position="488"/>
        <end position="740"/>
    </location>
</feature>
<feature type="transmembrane region" description="Helical" evidence="1">
    <location>
        <begin position="741"/>
        <end position="761"/>
    </location>
</feature>
<feature type="topological domain" description="Cytoplasmic" evidence="1">
    <location>
        <begin position="762"/>
        <end position="914"/>
    </location>
</feature>
<feature type="region of interest" description="Disordered" evidence="2">
    <location>
        <begin position="642"/>
        <end position="678"/>
    </location>
</feature>
<feature type="region of interest" description="Disordered" evidence="2">
    <location>
        <begin position="844"/>
        <end position="863"/>
    </location>
</feature>
<feature type="compositionally biased region" description="Gly residues" evidence="2">
    <location>
        <begin position="847"/>
        <end position="858"/>
    </location>
</feature>
<feature type="modified residue" description="Phosphoserine" evidence="8">
    <location>
        <position position="6"/>
    </location>
</feature>
<feature type="glycosylation site" description="N-linked (GlcNAc...) asparagine" evidence="1">
    <location>
        <position position="228"/>
    </location>
</feature>
<feature type="glycosylation site" description="N-linked (GlcNAc...) asparagine" evidence="1">
    <location>
        <position position="243"/>
    </location>
</feature>
<feature type="splice variant" id="VSP_033192" description="In isoform 2." evidence="6">
    <location>
        <begin position="61"/>
        <end position="149"/>
    </location>
</feature>
<feature type="splice variant" id="VSP_045591" description="In isoform 4." evidence="5">
    <original>GGMKPNTLVLGF</original>
    <variation>ESGTLLPWGFRS</variation>
    <location>
        <begin position="620"/>
        <end position="631"/>
    </location>
</feature>
<feature type="splice variant" id="VSP_033193" description="In isoform 2 and isoform 3." evidence="6">
    <original>GGMKPNTL</original>
    <variation>ESNSHPLP</variation>
    <location>
        <begin position="620"/>
        <end position="627"/>
    </location>
</feature>
<feature type="splice variant" id="VSP_033194" description="In isoform 2 and isoform 3." evidence="6">
    <location>
        <begin position="628"/>
        <end position="914"/>
    </location>
</feature>
<feature type="splice variant" id="VSP_045592" description="In isoform 4." evidence="5">
    <location>
        <begin position="632"/>
        <end position="914"/>
    </location>
</feature>
<feature type="sequence variant" id="VAR_089738" description="Found in a patient with a neurodevelopmental disorder; uncertain significance." evidence="4">
    <original>N</original>
    <variation>K</variation>
    <location>
        <position position="552"/>
    </location>
</feature>
<feature type="sequence variant" id="VAR_089739" description="Found in a patient with a neurodevelopmental disorder; uncertain significance." evidence="4">
    <location>
        <begin position="615"/>
        <end position="914"/>
    </location>
</feature>
<feature type="sequence conflict" description="In Ref. 4; BAH13476." evidence="7" ref="4">
    <original>A</original>
    <variation>T</variation>
    <location>
        <position position="10"/>
    </location>
</feature>
<feature type="sequence conflict" description="In Ref. 3; BAB40456." evidence="7" ref="3">
    <original>T</original>
    <variation>S</variation>
    <location>
        <position position="222"/>
    </location>
</feature>
<feature type="sequence conflict" description="In Ref. 3; BAB40456." evidence="7" ref="3">
    <original>S</original>
    <variation>A</variation>
    <location>
        <position position="231"/>
    </location>
</feature>
<feature type="sequence conflict" description="In Ref. 1; AAF88060." evidence="7" ref="1">
    <original>S</original>
    <variation>N</variation>
    <location>
        <position position="269"/>
    </location>
</feature>
<feature type="sequence conflict" description="In Ref. 1; AAF88060." evidence="7" ref="1">
    <original>L</original>
    <variation>F</variation>
    <location>
        <position position="602"/>
    </location>
</feature>
<feature type="sequence conflict" description="In Ref. 3; BAB40456." evidence="7" ref="3">
    <original>E</original>
    <variation>K</variation>
    <location>
        <position position="857"/>
    </location>
</feature>
<accession>Q9BXP2</accession>
<accession>B7Z740</accession>
<accession>D6W5X0</accession>
<accession>D6W5X2</accession>
<accession>F5H8C2</accession>
<accession>Q9BWL2</accession>
<accession>Q9BXP1</accession>
<accession>Q9BYI0</accession>
<accession>Q9NQR5</accession>
<protein>
    <recommendedName>
        <fullName>Solute carrier family 12 member 9</fullName>
    </recommendedName>
    <alternativeName>
        <fullName>Cation-chloride cotransporter 6</fullName>
        <shortName>hCCC6</shortName>
    </alternativeName>
    <alternativeName>
        <fullName>Cation-chloride cotransporter-interacting protein 1</fullName>
        <shortName>CCC-interacting protein 1</shortName>
        <shortName>hCIP1</shortName>
    </alternativeName>
    <alternativeName>
        <fullName>Potassium-chloride transporter 9</fullName>
    </alternativeName>
    <alternativeName>
        <fullName>WO3.3</fullName>
    </alternativeName>
</protein>
<comment type="function">
    <text evidence="3 4">May be an inhibitor of SLC12A1. Seems to correspond to a subunit of a multimeric transport system and thus, additional subunits may be required for its function (PubMed:10871601). May play a role in lysosomal ion flux and osmoregulation (PubMed:38334070).</text>
</comment>
<comment type="subunit">
    <text evidence="3">Interacts with SLC12A1.</text>
</comment>
<comment type="subcellular location">
    <subcellularLocation>
        <location evidence="3">Cell membrane</location>
        <topology evidence="3">Multi-pass membrane protein</topology>
    </subcellularLocation>
    <subcellularLocation>
        <location evidence="4">Lysosome membrane</location>
    </subcellularLocation>
</comment>
<comment type="alternative products">
    <event type="alternative splicing"/>
    <isoform>
        <id>Q9BXP2-1</id>
        <name>1</name>
        <sequence type="displayed"/>
    </isoform>
    <isoform>
        <id>Q9BXP2-2</id>
        <name>2</name>
        <sequence type="described" ref="VSP_033192 VSP_033193 VSP_033194"/>
    </isoform>
    <isoform>
        <id>Q9BXP2-3</id>
        <name>3</name>
        <sequence type="described" ref="VSP_033193 VSP_033194"/>
    </isoform>
    <isoform>
        <id>Q9BXP2-4</id>
        <name>4</name>
        <sequence type="described" ref="VSP_045591 VSP_045592"/>
    </isoform>
</comment>
<comment type="tissue specificity">
    <text>Highly expressed in placenta, brain and kidney. Lower expression in lung, liver and heart.</text>
</comment>
<comment type="disease">
    <text evidence="4">Defects in SLC12A9 may play a role in a neurodevelopmental disorder characterized by hypotonia, failure to thrive, moderate to severe developmental delay and intellectual disability, pale hair, eyebrows and eyelashes, and variable presence of seizures, congenital heart defects, skeletal, and brain anomalies.</text>
</comment>
<comment type="similarity">
    <text evidence="7">Belongs to the SLC12A transporter family.</text>
</comment>
<proteinExistence type="evidence at protein level"/>
<gene>
    <name type="primary">SLC12A9</name>
    <name type="synonym">CCC6</name>
    <name type="synonym">CIP1</name>
</gene>